<dbReference type="EC" id="3.1.3.-"/>
<dbReference type="EMBL" id="M35027">
    <property type="protein sequence ID" value="AAA48108.1"/>
    <property type="molecule type" value="Genomic_DNA"/>
</dbReference>
<dbReference type="PIR" id="H42515">
    <property type="entry name" value="H42515"/>
</dbReference>
<dbReference type="SMR" id="P21011"/>
<dbReference type="Proteomes" id="UP000008269">
    <property type="component" value="Segment"/>
</dbReference>
<dbReference type="GO" id="GO:0016787">
    <property type="term" value="F:hydrolase activity"/>
    <property type="evidence" value="ECO:0007669"/>
    <property type="project" value="UniProtKB-KW"/>
</dbReference>
<dbReference type="GO" id="GO:0046872">
    <property type="term" value="F:metal ion binding"/>
    <property type="evidence" value="ECO:0007669"/>
    <property type="project" value="UniProtKB-KW"/>
</dbReference>
<dbReference type="Gene3D" id="3.90.79.10">
    <property type="entry name" value="Nucleoside Triphosphate Pyrophosphohydrolase"/>
    <property type="match status" value="1"/>
</dbReference>
<dbReference type="InterPro" id="IPR015797">
    <property type="entry name" value="NUDIX_hydrolase-like_dom_sf"/>
</dbReference>
<dbReference type="InterPro" id="IPR000086">
    <property type="entry name" value="NUDIX_hydrolase_dom"/>
</dbReference>
<dbReference type="InterPro" id="IPR003300">
    <property type="entry name" value="Viral_VD9"/>
</dbReference>
<dbReference type="Pfam" id="PF00293">
    <property type="entry name" value="NUDIX"/>
    <property type="match status" value="1"/>
</dbReference>
<dbReference type="PRINTS" id="PR01363">
    <property type="entry name" value="VD09PROTEIN"/>
</dbReference>
<dbReference type="SUPFAM" id="SSF55811">
    <property type="entry name" value="Nudix"/>
    <property type="match status" value="1"/>
</dbReference>
<dbReference type="PROSITE" id="PS51462">
    <property type="entry name" value="NUDIX"/>
    <property type="match status" value="1"/>
</dbReference>
<dbReference type="PROSITE" id="PS00893">
    <property type="entry name" value="NUDIX_BOX"/>
    <property type="match status" value="1"/>
</dbReference>
<accession>P21011</accession>
<proteinExistence type="evidence at transcript level"/>
<sequence length="213" mass="25024">MGITMDEEVIFETPRELISIKRIKDIPRSKDTHVFAACITSDGYPLIGARRTSFAFQAILSQQNSDSIFRVSTKLLRFMYYNELREIFRRLRKGSINNIDPHFEELILLGGKLDKKESIKDCLRRELKEESDERITVKEFGNVILKLTTRDKLFNKVYISYCMACFINQSLEDLSHTSIYNVEIRKIKSLNDCINDDKYEYLSYIYNMLVNSK</sequence>
<gene>
    <name type="primary">OPG121</name>
    <name type="ORF">D9R</name>
</gene>
<comment type="function">
    <text evidence="2">Decapping enzyme that remove the protective 5'-cap from both host and viral mRNAs to commit transcripts for decay by the cellular exonuclease XRN1. Accelerates viral and cellular mRNA turnover to eliminate competing host mRNAs and allow stage-specific synthesis of viral proteins. Acceleration of the turnover of cellular transcripts may even promote the shutoff of host protein synthesis.</text>
</comment>
<comment type="catalytic activity">
    <reaction evidence="2">
        <text>a 5'-end (N(7)-methyl 5'-triphosphoguanosine)-guanosine in mRNA + H2O = a 5'-end phospho-guanosine in mRNA + N(7)-methyl-GDP + 2 H(+)</text>
        <dbReference type="Rhea" id="RHEA:60872"/>
        <dbReference type="Rhea" id="RHEA-COMP:15683"/>
        <dbReference type="Rhea" id="RHEA-COMP:15687"/>
        <dbReference type="ChEBI" id="CHEBI:15377"/>
        <dbReference type="ChEBI" id="CHEBI:15378"/>
        <dbReference type="ChEBI" id="CHEBI:63714"/>
        <dbReference type="ChEBI" id="CHEBI:143975"/>
        <dbReference type="ChEBI" id="CHEBI:143979"/>
    </reaction>
</comment>
<comment type="cofactor">
    <cofactor evidence="2">
        <name>Mg(2+)</name>
        <dbReference type="ChEBI" id="CHEBI:18420"/>
    </cofactor>
    <cofactor evidence="2">
        <name>Mn(2+)</name>
        <dbReference type="ChEBI" id="CHEBI:29035"/>
    </cofactor>
</comment>
<comment type="induction">
    <text>Expressed in the early phase of the viral replicative cycle.</text>
</comment>
<comment type="similarity">
    <text evidence="4">Belongs to the Nudix hydrolase family.</text>
</comment>
<evidence type="ECO:0000250" key="1"/>
<evidence type="ECO:0000250" key="2">
    <source>
        <dbReference type="UniProtKB" id="P04311"/>
    </source>
</evidence>
<evidence type="ECO:0000255" key="3">
    <source>
        <dbReference type="PROSITE-ProRule" id="PRU00794"/>
    </source>
</evidence>
<evidence type="ECO:0000305" key="4"/>
<organismHost>
    <name type="scientific">Homo sapiens</name>
    <name type="common">Human</name>
    <dbReference type="NCBI Taxonomy" id="9606"/>
</organismHost>
<organism>
    <name type="scientific">Vaccinia virus (strain Copenhagen)</name>
    <name type="common">VACV</name>
    <dbReference type="NCBI Taxonomy" id="10249"/>
    <lineage>
        <taxon>Viruses</taxon>
        <taxon>Varidnaviria</taxon>
        <taxon>Bamfordvirae</taxon>
        <taxon>Nucleocytoviricota</taxon>
        <taxon>Pokkesviricetes</taxon>
        <taxon>Chitovirales</taxon>
        <taxon>Poxviridae</taxon>
        <taxon>Chordopoxvirinae</taxon>
        <taxon>Orthopoxvirus</taxon>
        <taxon>Vaccinia virus</taxon>
    </lineage>
</organism>
<feature type="chain" id="PRO_0000057092" description="mRNA-decapping protein OPG121">
    <location>
        <begin position="1"/>
        <end position="213"/>
    </location>
</feature>
<feature type="domain" description="Nudix hydrolase" evidence="3">
    <location>
        <begin position="30"/>
        <end position="209"/>
    </location>
</feature>
<feature type="short sequence motif" description="Nudix box" evidence="3">
    <location>
        <begin position="111"/>
        <end position="132"/>
    </location>
</feature>
<feature type="active site" description="Nucleophile" evidence="1">
    <location>
        <position position="126"/>
    </location>
</feature>
<feature type="binding site" evidence="2">
    <location>
        <position position="16"/>
    </location>
    <ligand>
        <name>N(7)-methyl-GTP</name>
        <dbReference type="ChEBI" id="CHEBI:87133"/>
    </ligand>
</feature>
<feature type="binding site" evidence="2">
    <location>
        <position position="50"/>
    </location>
    <ligand>
        <name>N(7)-methyl-GTP</name>
        <dbReference type="ChEBI" id="CHEBI:87133"/>
    </ligand>
</feature>
<feature type="binding site" evidence="1">
    <location>
        <position position="117"/>
    </location>
    <ligand>
        <name>Mg(2+)</name>
        <dbReference type="ChEBI" id="CHEBI:18420"/>
    </ligand>
</feature>
<feature type="binding site" evidence="2">
    <location>
        <position position="126"/>
    </location>
    <ligand>
        <name>Mg(2+)</name>
        <dbReference type="ChEBI" id="CHEBI:18420"/>
    </ligand>
</feature>
<feature type="binding site" evidence="2">
    <location>
        <position position="130"/>
    </location>
    <ligand>
        <name>Mg(2+)</name>
        <dbReference type="ChEBI" id="CHEBI:18420"/>
    </ligand>
</feature>
<feature type="binding site" evidence="1">
    <location>
        <position position="151"/>
    </location>
    <ligand>
        <name>Mg(2+)</name>
        <dbReference type="ChEBI" id="CHEBI:18420"/>
    </ligand>
</feature>
<feature type="binding site" evidence="2">
    <location>
        <position position="151"/>
    </location>
    <ligand>
        <name>N(7)-methyl-GTP</name>
        <dbReference type="ChEBI" id="CHEBI:87133"/>
    </ligand>
</feature>
<feature type="binding site" evidence="2">
    <location>
        <position position="183"/>
    </location>
    <ligand>
        <name>Mg(2+)</name>
        <dbReference type="ChEBI" id="CHEBI:18420"/>
    </ligand>
</feature>
<name>PG121_VACCC</name>
<reference key="1">
    <citation type="journal article" date="1990" name="Virology">
        <title>The complete DNA sequence of vaccinia virus.</title>
        <authorList>
            <person name="Goebel S.J."/>
            <person name="Johnson G.P."/>
            <person name="Perkus M.E."/>
            <person name="Davis S.W."/>
            <person name="Winslow J.P."/>
            <person name="Paoletti E."/>
        </authorList>
    </citation>
    <scope>NUCLEOTIDE SEQUENCE [LARGE SCALE GENOMIC DNA]</scope>
</reference>
<reference key="2">
    <citation type="journal article" date="1990" name="Virology">
        <title>Appendix to 'The complete DNA sequence of vaccinia virus'.</title>
        <authorList>
            <person name="Goebel S.J."/>
            <person name="Johnson G.P."/>
            <person name="Perkus M.E."/>
            <person name="Davis S.W."/>
            <person name="Winslow J.P."/>
            <person name="Paoletti E."/>
        </authorList>
    </citation>
    <scope>NUCLEOTIDE SEQUENCE [LARGE SCALE GENOMIC DNA]</scope>
</reference>
<protein>
    <recommendedName>
        <fullName>mRNA-decapping protein OPG121</fullName>
        <ecNumber>3.1.3.-</ecNumber>
    </recommendedName>
</protein>
<keyword id="KW-0378">Hydrolase</keyword>
<keyword id="KW-0460">Magnesium</keyword>
<keyword id="KW-0464">Manganese</keyword>
<keyword id="KW-0479">Metal-binding</keyword>
<keyword id="KW-1185">Reference proteome</keyword>